<name>PP1B_RABIT</name>
<reference key="1">
    <citation type="journal article" date="1990" name="Eur. J. Biochem.">
        <title>Drosophila contains three genes that encode distinct isoforms of protein phosphatase 1.</title>
        <authorList>
            <person name="Dombradi V."/>
            <person name="Axton J.M."/>
            <person name="Brewis N.D."/>
            <person name="da Cruz e Silva E.F."/>
            <person name="Alphey L."/>
            <person name="Cohen P.T.W."/>
        </authorList>
    </citation>
    <scope>NUCLEOTIDE SEQUENCE [MRNA]</scope>
    <source>
        <strain>New Zealand white</strain>
    </source>
</reference>
<reference key="2">
    <citation type="journal article" date="1992" name="Eur. J. Biochem.">
        <title>A myofibrillar protein phosphatase from rabbit skeletal muscle contains the beta isoform of protein phosphatase-1 complexed to a regulatory subunit which greatly enhances the dephosphorylation of myosin.</title>
        <authorList>
            <person name="Dent P."/>
            <person name="MacDougall L.K."/>
            <person name="MacKintosh C."/>
            <person name="Campbell D.G."/>
            <person name="Cohen P."/>
        </authorList>
    </citation>
    <scope>PROTEIN SEQUENCE OF 26-35; 60-73; 147-149; 168-186; 222-232; 246-259 AND 304-319</scope>
    <scope>CATALYTIC ACTIVITY</scope>
    <scope>ACTIVITY REGULATION</scope>
    <scope>BIOPHYSICOCHEMICAL PROPERTIES</scope>
    <scope>SUBUNIT</scope>
    <source>
        <strain>New Zealand white</strain>
        <tissue>Skeletal muscle</tissue>
    </source>
</reference>
<reference key="3">
    <citation type="journal article" date="1998" name="FEBS Lett.">
        <title>The major myosin phosphatase in skeletal muscle is a complex between the beta-isoform of protein phosphatase 1 and the MYPT2 gene product.</title>
        <authorList>
            <person name="Moorhead G."/>
            <person name="Johnson D."/>
            <person name="Morrice N."/>
            <person name="Cohen P."/>
        </authorList>
    </citation>
    <scope>PROTEIN SEQUENCE OF 43-48; 113-121; 132-140; 150-165; 168-186; 188-204; 246-255 AND 267-286</scope>
    <scope>INTERACTION WITH PPP1R12B</scope>
    <source>
        <tissue>Skeletal muscle</tissue>
    </source>
</reference>
<organism>
    <name type="scientific">Oryctolagus cuniculus</name>
    <name type="common">Rabbit</name>
    <dbReference type="NCBI Taxonomy" id="9986"/>
    <lineage>
        <taxon>Eukaryota</taxon>
        <taxon>Metazoa</taxon>
        <taxon>Chordata</taxon>
        <taxon>Craniata</taxon>
        <taxon>Vertebrata</taxon>
        <taxon>Euteleostomi</taxon>
        <taxon>Mammalia</taxon>
        <taxon>Eutheria</taxon>
        <taxon>Euarchontoglires</taxon>
        <taxon>Glires</taxon>
        <taxon>Lagomorpha</taxon>
        <taxon>Leporidae</taxon>
        <taxon>Oryctolagus</taxon>
    </lineage>
</organism>
<protein>
    <recommendedName>
        <fullName>Serine/threonine-protein phosphatase PP1-beta catalytic subunit</fullName>
        <shortName>PP-1B</shortName>
        <ecNumber evidence="2">3.1.3.16</ecNumber>
        <ecNumber>3.1.3.53</ecNumber>
    </recommendedName>
</protein>
<dbReference type="EC" id="3.1.3.16" evidence="2"/>
<dbReference type="EC" id="3.1.3.53"/>
<dbReference type="EMBL" id="X61639">
    <property type="protein sequence ID" value="CAA43820.1"/>
    <property type="molecule type" value="mRNA"/>
</dbReference>
<dbReference type="PIR" id="S13829">
    <property type="entry name" value="S13829"/>
</dbReference>
<dbReference type="RefSeq" id="NP_001095192.1">
    <property type="nucleotide sequence ID" value="NM_001101722.1"/>
</dbReference>
<dbReference type="RefSeq" id="XP_051684835.1">
    <property type="nucleotide sequence ID" value="XM_051828875.2"/>
</dbReference>
<dbReference type="RefSeq" id="XP_069924004.1">
    <property type="nucleotide sequence ID" value="XM_070067903.1"/>
</dbReference>
<dbReference type="RefSeq" id="XP_069924005.1">
    <property type="nucleotide sequence ID" value="XM_070067904.1"/>
</dbReference>
<dbReference type="RefSeq" id="XP_069924006.1">
    <property type="nucleotide sequence ID" value="XM_070067905.1"/>
</dbReference>
<dbReference type="SMR" id="P62143"/>
<dbReference type="BioGRID" id="1172606">
    <property type="interactions" value="1"/>
</dbReference>
<dbReference type="FunCoup" id="P62143">
    <property type="interactions" value="1916"/>
</dbReference>
<dbReference type="STRING" id="9986.ENSOCUP00000046064"/>
<dbReference type="PaxDb" id="9986-ENSOCUP00000000885"/>
<dbReference type="GeneID" id="100009587"/>
<dbReference type="KEGG" id="ocu:100009587"/>
<dbReference type="CTD" id="5500"/>
<dbReference type="eggNOG" id="KOG0374">
    <property type="taxonomic scope" value="Eukaryota"/>
</dbReference>
<dbReference type="InParanoid" id="P62143"/>
<dbReference type="OrthoDB" id="1930084at2759"/>
<dbReference type="Proteomes" id="UP000001811">
    <property type="component" value="Unplaced"/>
</dbReference>
<dbReference type="GO" id="GO:0005730">
    <property type="term" value="C:nucleolus"/>
    <property type="evidence" value="ECO:0007669"/>
    <property type="project" value="UniProtKB-SubCell"/>
</dbReference>
<dbReference type="GO" id="GO:0005654">
    <property type="term" value="C:nucleoplasm"/>
    <property type="evidence" value="ECO:0007669"/>
    <property type="project" value="UniProtKB-SubCell"/>
</dbReference>
<dbReference type="GO" id="GO:0072357">
    <property type="term" value="C:PTW/PP1 phosphatase complex"/>
    <property type="evidence" value="ECO:0000250"/>
    <property type="project" value="UniProtKB"/>
</dbReference>
<dbReference type="GO" id="GO:0098723">
    <property type="term" value="C:skeletal muscle myofibril"/>
    <property type="evidence" value="ECO:0000314"/>
    <property type="project" value="CAFA"/>
</dbReference>
<dbReference type="GO" id="GO:0030145">
    <property type="term" value="F:manganese ion binding"/>
    <property type="evidence" value="ECO:0000314"/>
    <property type="project" value="CAFA"/>
</dbReference>
<dbReference type="GO" id="GO:0017018">
    <property type="term" value="F:myosin phosphatase activity"/>
    <property type="evidence" value="ECO:0000314"/>
    <property type="project" value="UniProtKB"/>
</dbReference>
<dbReference type="GO" id="GO:0050115">
    <property type="term" value="F:myosin-light-chain-phosphatase activity"/>
    <property type="evidence" value="ECO:0000250"/>
    <property type="project" value="UniProtKB"/>
</dbReference>
<dbReference type="GO" id="GO:0016791">
    <property type="term" value="F:phosphatase activity"/>
    <property type="evidence" value="ECO:0000250"/>
    <property type="project" value="UniProtKB"/>
</dbReference>
<dbReference type="GO" id="GO:0004721">
    <property type="term" value="F:phosphoprotein phosphatase activity"/>
    <property type="evidence" value="ECO:0000314"/>
    <property type="project" value="CAFA"/>
</dbReference>
<dbReference type="GO" id="GO:0051301">
    <property type="term" value="P:cell division"/>
    <property type="evidence" value="ECO:0007669"/>
    <property type="project" value="UniProtKB-KW"/>
</dbReference>
<dbReference type="GO" id="GO:0032922">
    <property type="term" value="P:circadian regulation of gene expression"/>
    <property type="evidence" value="ECO:0000250"/>
    <property type="project" value="UniProtKB"/>
</dbReference>
<dbReference type="GO" id="GO:0043153">
    <property type="term" value="P:entrainment of circadian clock by photoperiod"/>
    <property type="evidence" value="ECO:0000250"/>
    <property type="project" value="UniProtKB"/>
</dbReference>
<dbReference type="GO" id="GO:0005977">
    <property type="term" value="P:glycogen metabolic process"/>
    <property type="evidence" value="ECO:0007669"/>
    <property type="project" value="UniProtKB-KW"/>
</dbReference>
<dbReference type="GO" id="GO:0006470">
    <property type="term" value="P:protein dephosphorylation"/>
    <property type="evidence" value="ECO:0000250"/>
    <property type="project" value="UniProtKB"/>
</dbReference>
<dbReference type="GO" id="GO:0030155">
    <property type="term" value="P:regulation of cell adhesion"/>
    <property type="evidence" value="ECO:0000250"/>
    <property type="project" value="UniProtKB"/>
</dbReference>
<dbReference type="GO" id="GO:0042752">
    <property type="term" value="P:regulation of circadian rhythm"/>
    <property type="evidence" value="ECO:0000250"/>
    <property type="project" value="UniProtKB"/>
</dbReference>
<dbReference type="CDD" id="cd07414">
    <property type="entry name" value="MPP_PP1_PPKL"/>
    <property type="match status" value="1"/>
</dbReference>
<dbReference type="FunFam" id="3.60.21.10:FF:000007">
    <property type="entry name" value="Serine/threonine-protein phosphatase"/>
    <property type="match status" value="1"/>
</dbReference>
<dbReference type="Gene3D" id="3.60.21.10">
    <property type="match status" value="1"/>
</dbReference>
<dbReference type="InterPro" id="IPR004843">
    <property type="entry name" value="Calcineurin-like_PHP_ApaH"/>
</dbReference>
<dbReference type="InterPro" id="IPR029052">
    <property type="entry name" value="Metallo-depent_PP-like"/>
</dbReference>
<dbReference type="InterPro" id="IPR050341">
    <property type="entry name" value="PP1_catalytic_subunit"/>
</dbReference>
<dbReference type="InterPro" id="IPR006186">
    <property type="entry name" value="Ser/Thr-sp_prot-phosphatase"/>
</dbReference>
<dbReference type="InterPro" id="IPR031675">
    <property type="entry name" value="STPPase_N"/>
</dbReference>
<dbReference type="PANTHER" id="PTHR11668">
    <property type="entry name" value="SERINE/THREONINE PROTEIN PHOSPHATASE"/>
    <property type="match status" value="1"/>
</dbReference>
<dbReference type="PANTHER" id="PTHR11668:SF472">
    <property type="entry name" value="SERINE_THREONINE-PROTEIN PHOSPHATASE PP1-BETA CATALYTIC SUBUNIT"/>
    <property type="match status" value="1"/>
</dbReference>
<dbReference type="Pfam" id="PF00149">
    <property type="entry name" value="Metallophos"/>
    <property type="match status" value="1"/>
</dbReference>
<dbReference type="Pfam" id="PF16891">
    <property type="entry name" value="STPPase_N"/>
    <property type="match status" value="1"/>
</dbReference>
<dbReference type="PRINTS" id="PR00114">
    <property type="entry name" value="STPHPHTASE"/>
</dbReference>
<dbReference type="SMART" id="SM00156">
    <property type="entry name" value="PP2Ac"/>
    <property type="match status" value="1"/>
</dbReference>
<dbReference type="SUPFAM" id="SSF56300">
    <property type="entry name" value="Metallo-dependent phosphatases"/>
    <property type="match status" value="1"/>
</dbReference>
<dbReference type="PROSITE" id="PS00125">
    <property type="entry name" value="SER_THR_PHOSPHATASE"/>
    <property type="match status" value="1"/>
</dbReference>
<gene>
    <name type="primary">PPP1CB</name>
</gene>
<sequence length="327" mass="37187">MADGELNVDSLITRLLEVRGCRPGKIVQMTEAEVRGLCIKSREIFLSQPILLELEAPLKICGDIHGQYTDLLRLFEYGGFPPEANYLFLGDYVDRGKQSLETICLLLAYKIKYPENFFLLRGNHECASINRIYGFYDECKRRFNIKLWKTFTDCFNCLPIAAIVDEKIFCCHGGLSPDLQSMEQIRRIMRPTDVPDTGLLCDLLWSDPDKDVQGWGENDRGVSFTFGADVVSKFLNRHDLDLICRAHQVVEDGYEFFAKRQLVTLFSAPNYCGEFDNAGGMMSVDETLMCSFQILKPSEKKAKYQYGGLNSGRPVTPPRTANPPKKR</sequence>
<proteinExistence type="evidence at protein level"/>
<evidence type="ECO:0000250" key="1"/>
<evidence type="ECO:0000250" key="2">
    <source>
        <dbReference type="UniProtKB" id="P62140"/>
    </source>
</evidence>
<evidence type="ECO:0000250" key="3">
    <source>
        <dbReference type="UniProtKB" id="P62141"/>
    </source>
</evidence>
<evidence type="ECO:0000256" key="4">
    <source>
        <dbReference type="SAM" id="MobiDB-lite"/>
    </source>
</evidence>
<evidence type="ECO:0000269" key="5">
    <source>
    </source>
</evidence>
<evidence type="ECO:0000269" key="6">
    <source>
    </source>
</evidence>
<evidence type="ECO:0000305" key="7"/>
<keyword id="KW-0007">Acetylation</keyword>
<keyword id="KW-0090">Biological rhythms</keyword>
<keyword id="KW-0119">Carbohydrate metabolism</keyword>
<keyword id="KW-0131">Cell cycle</keyword>
<keyword id="KW-0132">Cell division</keyword>
<keyword id="KW-0963">Cytoplasm</keyword>
<keyword id="KW-0903">Direct protein sequencing</keyword>
<keyword id="KW-0321">Glycogen metabolism</keyword>
<keyword id="KW-0378">Hydrolase</keyword>
<keyword id="KW-0464">Manganese</keyword>
<keyword id="KW-0479">Metal-binding</keyword>
<keyword id="KW-0539">Nucleus</keyword>
<keyword id="KW-0597">Phosphoprotein</keyword>
<keyword id="KW-0904">Protein phosphatase</keyword>
<keyword id="KW-1185">Reference proteome</keyword>
<feature type="initiator methionine" description="Removed" evidence="2">
    <location>
        <position position="1"/>
    </location>
</feature>
<feature type="chain" id="PRO_0000058782" description="Serine/threonine-protein phosphatase PP1-beta catalytic subunit">
    <location>
        <begin position="2"/>
        <end position="327"/>
    </location>
</feature>
<feature type="region of interest" description="Disordered" evidence="4">
    <location>
        <begin position="305"/>
        <end position="327"/>
    </location>
</feature>
<feature type="active site" description="Proton donor" evidence="1">
    <location>
        <position position="124"/>
    </location>
</feature>
<feature type="binding site" evidence="1">
    <location>
        <position position="63"/>
    </location>
    <ligand>
        <name>Mn(2+)</name>
        <dbReference type="ChEBI" id="CHEBI:29035"/>
        <label>1</label>
    </ligand>
</feature>
<feature type="binding site" evidence="1">
    <location>
        <position position="65"/>
    </location>
    <ligand>
        <name>Mn(2+)</name>
        <dbReference type="ChEBI" id="CHEBI:29035"/>
        <label>1</label>
    </ligand>
</feature>
<feature type="binding site" evidence="1">
    <location>
        <position position="91"/>
    </location>
    <ligand>
        <name>Mn(2+)</name>
        <dbReference type="ChEBI" id="CHEBI:29035"/>
        <label>1</label>
    </ligand>
</feature>
<feature type="binding site" evidence="1">
    <location>
        <position position="91"/>
    </location>
    <ligand>
        <name>Mn(2+)</name>
        <dbReference type="ChEBI" id="CHEBI:29035"/>
        <label>2</label>
    </ligand>
</feature>
<feature type="binding site" evidence="1">
    <location>
        <position position="123"/>
    </location>
    <ligand>
        <name>Mn(2+)</name>
        <dbReference type="ChEBI" id="CHEBI:29035"/>
        <label>2</label>
    </ligand>
</feature>
<feature type="binding site" evidence="1">
    <location>
        <position position="172"/>
    </location>
    <ligand>
        <name>Mn(2+)</name>
        <dbReference type="ChEBI" id="CHEBI:29035"/>
        <label>2</label>
    </ligand>
</feature>
<feature type="binding site" evidence="1">
    <location>
        <position position="247"/>
    </location>
    <ligand>
        <name>Mn(2+)</name>
        <dbReference type="ChEBI" id="CHEBI:29035"/>
        <label>2</label>
    </ligand>
</feature>
<feature type="modified residue" description="N-acetylalanine" evidence="2">
    <location>
        <position position="2"/>
    </location>
</feature>
<feature type="modified residue" description="Phosphothreonine" evidence="2">
    <location>
        <position position="316"/>
    </location>
</feature>
<comment type="function">
    <text evidence="1 2">Protein phosphatase that associates with over 200 regulatory proteins to form highly specific holoenzymes which dephosphorylate hundreds of biological targets. Protein phosphatase (PP1) is essential for cell division, it participates in the regulation of glycogen metabolism, muscle contractility and protein synthesis. Involved in regulation of ionic conductances and long-term synaptic plasticity. Component of the PTW/PP1 phosphatase complex, which plays a role in the control of chromatin structure and cell cycle progression during the transition from mitosis into interphase. In balance with CSNK1D and CSNK1E, determines the circadian period length, through the regulation of the speed and rhythmicity of PER1 and PER2 phosphorylation. May dephosphorylate CSNK1D and CSNK1E (By similarity). Core component of the SHOC2-MRAS-PP1c (SMP) holophosphatase complex that regulates the MAPK pathway activation (By similarity). The SMP complex specifically dephosphorylates the inhibitory phosphorylation at 'Ser-259' of RAF1 kinase, 'Ser-365' of BRAF kinase and 'Ser-214' of ARAF kinase, stimulating their kinase activities (By similarity). The SMP complex enhances the dephosphorylation activity and substrate specificity of PP1c (By similarity).</text>
</comment>
<comment type="catalytic activity">
    <reaction evidence="5">
        <text>O-phospho-L-seryl-[protein] + H2O = L-seryl-[protein] + phosphate</text>
        <dbReference type="Rhea" id="RHEA:20629"/>
        <dbReference type="Rhea" id="RHEA-COMP:9863"/>
        <dbReference type="Rhea" id="RHEA-COMP:11604"/>
        <dbReference type="ChEBI" id="CHEBI:15377"/>
        <dbReference type="ChEBI" id="CHEBI:29999"/>
        <dbReference type="ChEBI" id="CHEBI:43474"/>
        <dbReference type="ChEBI" id="CHEBI:83421"/>
        <dbReference type="EC" id="3.1.3.16"/>
    </reaction>
</comment>
<comment type="catalytic activity">
    <reaction evidence="5">
        <text>O-phospho-L-threonyl-[protein] + H2O = L-threonyl-[protein] + phosphate</text>
        <dbReference type="Rhea" id="RHEA:47004"/>
        <dbReference type="Rhea" id="RHEA-COMP:11060"/>
        <dbReference type="Rhea" id="RHEA-COMP:11605"/>
        <dbReference type="ChEBI" id="CHEBI:15377"/>
        <dbReference type="ChEBI" id="CHEBI:30013"/>
        <dbReference type="ChEBI" id="CHEBI:43474"/>
        <dbReference type="ChEBI" id="CHEBI:61977"/>
        <dbReference type="EC" id="3.1.3.16"/>
    </reaction>
</comment>
<comment type="catalytic activity">
    <reaction evidence="5">
        <text>O-phospho-L-seryl-[myosin light chain] + H2O = L-seryl-[myosin light chain] + phosphate</text>
        <dbReference type="Rhea" id="RHEA:12849"/>
        <dbReference type="Rhea" id="RHEA-COMP:13684"/>
        <dbReference type="Rhea" id="RHEA-COMP:13685"/>
        <dbReference type="ChEBI" id="CHEBI:15377"/>
        <dbReference type="ChEBI" id="CHEBI:29999"/>
        <dbReference type="ChEBI" id="CHEBI:43474"/>
        <dbReference type="ChEBI" id="CHEBI:83421"/>
        <dbReference type="EC" id="3.1.3.53"/>
    </reaction>
</comment>
<comment type="catalytic activity">
    <reaction evidence="5">
        <text>O-phospho-L-threonyl-[myosin light chain] + H2O = L-threonyl-[myosin light chain] + phosphate</text>
        <dbReference type="Rhea" id="RHEA:53988"/>
        <dbReference type="Rhea" id="RHEA-COMP:13686"/>
        <dbReference type="Rhea" id="RHEA-COMP:13687"/>
        <dbReference type="ChEBI" id="CHEBI:15377"/>
        <dbReference type="ChEBI" id="CHEBI:30013"/>
        <dbReference type="ChEBI" id="CHEBI:43474"/>
        <dbReference type="ChEBI" id="CHEBI:61977"/>
        <dbReference type="EC" id="3.1.3.53"/>
    </reaction>
</comment>
<comment type="cofactor">
    <cofactor evidence="1">
        <name>Mn(2+)</name>
        <dbReference type="ChEBI" id="CHEBI:29035"/>
    </cofactor>
    <text evidence="1">Binds 2 manganese ions per subunit.</text>
</comment>
<comment type="activity regulation">
    <text evidence="1 5">The phosphatase activity of the PPP1R15A-PP1 complex toward EIF2S1 is specifically inhibited by Salubrinal, a drug that protects cells from endoplasmic reticulum stress (By similarity). Inhibited by the toxins okadaic acid, tautomycin and microcystin Leu-Arg.</text>
</comment>
<comment type="biophysicochemical properties">
    <kinetics>
        <KM evidence="5">5 uM for phosphorylase</KM>
    </kinetics>
</comment>
<comment type="subunit">
    <text evidence="2 3 5 6">PP1 comprises a catalytic subunit, PPP1CA, PPP1CB or PPP1CC, which is folded into its native form by inhibitor 2 and glycogen synthetase kinase 3, and then complexed to one or several targeting or regulatory subunits. The targeting or regulatory subunits determine the substrate specificity of PP1. PPP1R12A, and PPP1R12C mediate binding to myosin. PPP1R3A (in skeletal muscle), PPP1R3B (in liver), PPP1R3C, PPP1R3D and PPP1R3F (in brain) mediate binding to glycogen. PPP1R15A and PPP1R15B mediate binding to EIF2S1. Part of a complex containing PPP1R15B, PP1 and NCK1/2. Interacts with PPP1R7 and PPP1R12C. Interacts with PPP1R16B. Component of the PTW/PP1 phosphatase complex, composed of PPP1R10/PNUTS, TOX4, WDR82, and PPP1CA or PPP1CB or PPP1CC. Interacts with PPP1R8. Interacts with PPP1R12A and NUAK1; the interaction is direct. Interacts with TRIM28; the interaction dephosphorylates TRIM28 on 'Ser-824' and forms a complex at the p21 promoter site (By similarity). Interacts with PPP1R12B (PubMed:9827534). Interacts with FOXP3 (By similarity). Interacts with RRP1B (By similarity). Interacts with SERPINE1. Interacts with LZTR1 (By similarity). Component of the SHOC2-MRAS-PP1c (SMP) complex consisting of SHOC2, GTP-bound M-Ras/MRAS and the catalytic subunit of protein phosphatase 1 (either PPP1CA, PPP1CB or PPP1CC) (By similarity). SHOC2 and PP1c preferably bind M-Ras/MRAS, but they also bind K-Ras/KRAS, N-Ras/NRAS and H-Ras/HRAS; these interactions are GTP-dependent and both SHOC2 and PP1c are required to form a stable complex (By similarity). Interacts with SHOC2 in the absence of Ras GTPases (By similarity).</text>
</comment>
<comment type="subcellular location">
    <subcellularLocation>
        <location evidence="2">Cytoplasm</location>
    </subcellularLocation>
    <subcellularLocation>
        <location evidence="2">Nucleus</location>
    </subcellularLocation>
    <subcellularLocation>
        <location evidence="2">Nucleus</location>
        <location evidence="2">Nucleoplasm</location>
    </subcellularLocation>
    <subcellularLocation>
        <location evidence="2">Nucleus</location>
        <location evidence="2">Nucleolus</location>
    </subcellularLocation>
    <text evidence="2">Highly mobile in cells and can be relocalized through interaction with targeting subunits. In the presence of PPP1R8 relocalizes from the nucleus to nuclear speckles.</text>
</comment>
<comment type="similarity">
    <text evidence="7">Belongs to the PPP phosphatase family. PP-1 subfamily.</text>
</comment>
<comment type="online information" name="Protein Spotlight">
    <link uri="https://www.proteinspotlight.org/back_issues/032"/>
    <text>The things we forget - Issue 32 of March 2003</text>
</comment>
<accession>P62143</accession>
<accession>P37140</accession>